<proteinExistence type="inferred from homology"/>
<name>CLPS_YERPG</name>
<sequence length="106" mass="12305">MGKNNDWLNFEHLVKDKQIEALQPPSMYKVILNNDDYTPMEFVIDVLQKFFSYDIERATQLMLNVHYQGKAICGVFTAEVAETKVAHVNQYARENEHPLLCTLEKA</sequence>
<protein>
    <recommendedName>
        <fullName evidence="1">ATP-dependent Clp protease adapter protein ClpS</fullName>
    </recommendedName>
</protein>
<feature type="chain" id="PRO_1000115489" description="ATP-dependent Clp protease adapter protein ClpS">
    <location>
        <begin position="1"/>
        <end position="106"/>
    </location>
</feature>
<organism>
    <name type="scientific">Yersinia pestis bv. Antiqua (strain Angola)</name>
    <dbReference type="NCBI Taxonomy" id="349746"/>
    <lineage>
        <taxon>Bacteria</taxon>
        <taxon>Pseudomonadati</taxon>
        <taxon>Pseudomonadota</taxon>
        <taxon>Gammaproteobacteria</taxon>
        <taxon>Enterobacterales</taxon>
        <taxon>Yersiniaceae</taxon>
        <taxon>Yersinia</taxon>
    </lineage>
</organism>
<accession>A9R4Y5</accession>
<dbReference type="EMBL" id="CP000901">
    <property type="protein sequence ID" value="ABX84994.1"/>
    <property type="molecule type" value="Genomic_DNA"/>
</dbReference>
<dbReference type="RefSeq" id="WP_002211349.1">
    <property type="nucleotide sequence ID" value="NZ_CP009935.1"/>
</dbReference>
<dbReference type="SMR" id="A9R4Y5"/>
<dbReference type="GeneID" id="96664964"/>
<dbReference type="KEGG" id="ypg:YpAngola_A1600"/>
<dbReference type="PATRIC" id="fig|349746.12.peg.2566"/>
<dbReference type="GO" id="GO:0030163">
    <property type="term" value="P:protein catabolic process"/>
    <property type="evidence" value="ECO:0007669"/>
    <property type="project" value="InterPro"/>
</dbReference>
<dbReference type="GO" id="GO:0006508">
    <property type="term" value="P:proteolysis"/>
    <property type="evidence" value="ECO:0007669"/>
    <property type="project" value="UniProtKB-UniRule"/>
</dbReference>
<dbReference type="FunFam" id="3.30.1390.10:FF:000002">
    <property type="entry name" value="ATP-dependent Clp protease adapter protein ClpS"/>
    <property type="match status" value="1"/>
</dbReference>
<dbReference type="Gene3D" id="3.30.1390.10">
    <property type="match status" value="1"/>
</dbReference>
<dbReference type="HAMAP" id="MF_00302">
    <property type="entry name" value="ClpS"/>
    <property type="match status" value="1"/>
</dbReference>
<dbReference type="InterPro" id="IPR022935">
    <property type="entry name" value="ClpS"/>
</dbReference>
<dbReference type="InterPro" id="IPR003769">
    <property type="entry name" value="ClpS_core"/>
</dbReference>
<dbReference type="InterPro" id="IPR014719">
    <property type="entry name" value="Ribosomal_bL12_C/ClpS-like"/>
</dbReference>
<dbReference type="NCBIfam" id="NF000670">
    <property type="entry name" value="PRK00033.1-3"/>
    <property type="match status" value="1"/>
</dbReference>
<dbReference type="NCBIfam" id="NF000672">
    <property type="entry name" value="PRK00033.1-5"/>
    <property type="match status" value="1"/>
</dbReference>
<dbReference type="PANTHER" id="PTHR33473:SF19">
    <property type="entry name" value="ATP-DEPENDENT CLP PROTEASE ADAPTER PROTEIN CLPS"/>
    <property type="match status" value="1"/>
</dbReference>
<dbReference type="PANTHER" id="PTHR33473">
    <property type="entry name" value="ATP-DEPENDENT CLP PROTEASE ADAPTER PROTEIN CLPS1, CHLOROPLASTIC"/>
    <property type="match status" value="1"/>
</dbReference>
<dbReference type="Pfam" id="PF02617">
    <property type="entry name" value="ClpS"/>
    <property type="match status" value="1"/>
</dbReference>
<dbReference type="SUPFAM" id="SSF54736">
    <property type="entry name" value="ClpS-like"/>
    <property type="match status" value="1"/>
</dbReference>
<comment type="function">
    <text evidence="1">Involved in the modulation of the specificity of the ClpAP-mediated ATP-dependent protein degradation.</text>
</comment>
<comment type="subunit">
    <text evidence="1">Binds to the N-terminal domain of the chaperone ClpA.</text>
</comment>
<comment type="similarity">
    <text evidence="1">Belongs to the ClpS family.</text>
</comment>
<evidence type="ECO:0000255" key="1">
    <source>
        <dbReference type="HAMAP-Rule" id="MF_00302"/>
    </source>
</evidence>
<reference key="1">
    <citation type="journal article" date="2010" name="J. Bacteriol.">
        <title>Genome sequence of the deep-rooted Yersinia pestis strain Angola reveals new insights into the evolution and pangenome of the plague bacterium.</title>
        <authorList>
            <person name="Eppinger M."/>
            <person name="Worsham P.L."/>
            <person name="Nikolich M.P."/>
            <person name="Riley D.R."/>
            <person name="Sebastian Y."/>
            <person name="Mou S."/>
            <person name="Achtman M."/>
            <person name="Lindler L.E."/>
            <person name="Ravel J."/>
        </authorList>
    </citation>
    <scope>NUCLEOTIDE SEQUENCE [LARGE SCALE GENOMIC DNA]</scope>
    <source>
        <strain>Angola</strain>
    </source>
</reference>
<gene>
    <name evidence="1" type="primary">clpS</name>
    <name type="ordered locus">YpAngola_A1600</name>
</gene>